<sequence length="1392" mass="155710">MNYSFTEKKRIRKSFAKRENVLEVPFLLATQIDSYAKFLQLENAFDKRTDDGLQAAFNSIFPIVSHNGYARLEFVHYTLGEPLFDIPECQLRGITYAAPLRARIRLVILDKEASKPTVKEVRENEVYMGEIPLMTPSGSFVINGTERVIVSQLHRSPGVFFEHDKGKTHSSGKLLFSARIIPYRGSWLDFEFDPKDLLYFRIDRRRKMPVTILLKALGYNNEQILDIFYDKETFYLSSNGVQTDLVADRLKGETAKVDILDKEGNVLVAKGKRITAKNIRDITNAGLTRLDVEPESLLGKALAADLIDSETGEVLASANDEITEELLAKFDINGVKEITTLYINELDQGAYISNTLRTDETAGRQAARVAIYRMMRPGEPPTEEAVEQLFNRLFFSEDSYDLSRVGRMKFNTRTYEQKLSEAQQNSWYGRLLNETFAGAADKGGYVLSVEDIVASIATLVELRNGHGEVDDIDHLGNRRVRSVGELTENQFRSGLARVERAVKERLNQAESENLMPHDLINAKPVSAAIKEFFGSSQLSQFMDQTNPLSEVTHKRRVSALGPGGLTRERAGFEVRDVHPTHYGRVCPIETPEGPNIGLINSLSVYARTNDYGFLETPYRRVIDGKVTEEIDYLSAIEEGRYVIAQANADLDSDGNLIGDLVTCREKGETIMATPDRVQYMDVATGQVVSVAASLIPFLEHDDANRALMGANMQRQAVPCLRPEKPMVGTGIERSVAVDSATAIVARRGGVVEYVDANRVVIRVHDDEATAGEVGVDIYNLVKFTRSNQSTNINQRPAVKAGDVLQRGDLVADGASTDFGELALGQNMTIAFMPWNGYNYEDSILISEKVAADDRYTSIHIEELNVVARDTKLGAEDITRDIPNLSERMQNRLDESGIVYIGAEVEAGDVLVGKVTPKGETQLTPEEKLLRAIFGEKASDVKDTSLRMPTGMSGTVIDVQVFTREGIQRDKRAQSIIDSELKRYRLDLNDQLRIFDNDAFDRIERMIVGQKANGGPMKLAKGSEITTEYLAGLPSRHDWFDIRLTDEDLAKQLELIKVSLQQKREEADELYEIKKKKLTQGDELQPGVQKMVKVFIAIKRRLQAGDKMAGRHGNKGVVSRILPVEDMPYMADGRPVDIVLNPLGVPSRMNIGQILEVHLGWAAKGIGERIDRMLKEQRKAGELREFLNRLYNGSGKKEDLDALTDEEIIELASNLRKGASFASPVFDGAKESEIREMLNLAYPSDDPEVEKLGFNDSKTQITLYDGRSGEAFDRKVTVGVMHYLKLHHLVDEKMHARSTGPYSLVTQQPLGGKAQFGGQRFGEMEVWALEAYGAAYTLQEMLTVKSDDVNGRTKMYENIVKGEHKIDAGMPESFNVLVKEIRSLGLDIDLERY</sequence>
<feature type="chain" id="PRO_0000047930" description="DNA-directed RNA polymerase subunit beta">
    <location>
        <begin position="1"/>
        <end position="1392"/>
    </location>
</feature>
<feature type="sequence variant" description="Rifampicin resistant." evidence="2">
    <original>S</original>
    <variation>P</variation>
    <location>
        <position position="549"/>
    </location>
</feature>
<feature type="sequence conflict" description="In Ref. 1; CAA91164." evidence="3" ref="1">
    <original>N</original>
    <variation>S</variation>
    <location>
        <position position="2"/>
    </location>
</feature>
<feature type="sequence conflict" description="In Ref. 1; CAA91164." evidence="3" ref="1">
    <original>L</original>
    <variation>I</variation>
    <location>
        <position position="28"/>
    </location>
</feature>
<feature type="sequence conflict" description="In Ref. 1; CAA91164." evidence="3" ref="1">
    <original>ILDIFYDKETFYLSSNGVQTDLVADRLKG</original>
    <variation>NLGYFLRQRNVLFVFKRCSNRFGRRPSES</variation>
    <location>
        <begin position="224"/>
        <end position="252"/>
    </location>
</feature>
<feature type="sequence conflict" description="In Ref. 1; CAA91164." evidence="3" ref="1">
    <original>N</original>
    <variation>L</variation>
    <location>
        <position position="284"/>
    </location>
</feature>
<feature type="sequence conflict" description="In Ref. 1; CAA91164." evidence="3" ref="1">
    <original>AYISNTLRTDE</original>
    <variation>VISPIPCVRMK</variation>
    <location>
        <begin position="350"/>
        <end position="360"/>
    </location>
</feature>
<feature type="sequence conflict" description="In Ref. 1; CAA91164." evidence="3" ref="1">
    <location>
        <position position="378"/>
    </location>
</feature>
<feature type="sequence conflict" description="In Ref. 1; CAA91164." evidence="3" ref="1">
    <original>A</original>
    <variation>G</variation>
    <location>
        <position position="648"/>
    </location>
</feature>
<feature type="sequence conflict" description="In Ref. 1; CAA91164." evidence="3" ref="1">
    <original>A</original>
    <variation>P</variation>
    <location>
        <position position="706"/>
    </location>
</feature>
<feature type="sequence conflict" description="In Ref. 1; CAA91164." evidence="3" ref="1">
    <original>VP</original>
    <variation>SA</variation>
    <location>
        <begin position="717"/>
        <end position="718"/>
    </location>
</feature>
<feature type="sequence conflict" description="In Ref. 1; CAA91164." evidence="3" ref="1">
    <original>GG</original>
    <variation>A</variation>
    <location>
        <begin position="748"/>
        <end position="749"/>
    </location>
</feature>
<feature type="sequence conflict" description="In Ref. 1; CAA91164." evidence="3" ref="1">
    <original>F</original>
    <variation>L</variation>
    <location>
        <position position="818"/>
    </location>
</feature>
<feature type="sequence conflict" description="In Ref. 1; CAA91164." evidence="3" ref="1">
    <original>GY</original>
    <variation>VN</variation>
    <location>
        <begin position="836"/>
        <end position="837"/>
    </location>
</feature>
<feature type="sequence conflict" description="In Ref. 1; CAA91164." evidence="3" ref="1">
    <original>YNG</original>
    <variation>SR</variation>
    <location>
        <begin position="1190"/>
        <end position="1192"/>
    </location>
</feature>
<feature type="sequence conflict" description="In Ref. 1; CAA91164." evidence="3" ref="1">
    <original>A</original>
    <variation>S</variation>
    <location>
        <position position="1201"/>
    </location>
</feature>
<feature type="sequence conflict" description="In Ref. 1; CAA91164." evidence="3" ref="1">
    <original>DDP</original>
    <variation>EDA</variation>
    <location>
        <begin position="1244"/>
        <end position="1246"/>
    </location>
</feature>
<feature type="sequence conflict" description="In Ref. 1; CAA91164." evidence="3" ref="1">
    <original>F</original>
    <variation>L</variation>
    <location>
        <position position="1373"/>
    </location>
</feature>
<keyword id="KW-0046">Antibiotic resistance</keyword>
<keyword id="KW-0240">DNA-directed RNA polymerase</keyword>
<keyword id="KW-0548">Nucleotidyltransferase</keyword>
<keyword id="KW-1185">Reference proteome</keyword>
<keyword id="KW-0804">Transcription</keyword>
<keyword id="KW-0808">Transferase</keyword>
<organism>
    <name type="scientific">Neisseria meningitidis serogroup B (strain ATCC BAA-335 / MC58)</name>
    <dbReference type="NCBI Taxonomy" id="122586"/>
    <lineage>
        <taxon>Bacteria</taxon>
        <taxon>Pseudomonadati</taxon>
        <taxon>Pseudomonadota</taxon>
        <taxon>Betaproteobacteria</taxon>
        <taxon>Neisseriales</taxon>
        <taxon>Neisseriaceae</taxon>
        <taxon>Neisseria</taxon>
    </lineage>
</organism>
<name>RPOB_NEIMB</name>
<gene>
    <name evidence="1" type="primary">rpoB</name>
    <name type="ordered locus">NMB0132</name>
</gene>
<proteinExistence type="inferred from homology"/>
<evidence type="ECO:0000255" key="1">
    <source>
        <dbReference type="HAMAP-Rule" id="MF_01321"/>
    </source>
</evidence>
<evidence type="ECO:0000269" key="2">
    <source>
    </source>
</evidence>
<evidence type="ECO:0000305" key="3"/>
<reference key="1">
    <citation type="journal article" date="1997" name="J. Antimicrob. Chemother.">
        <title>Rifampicin resistance in Neisseria meningitidis: evidence from a study of sibling strains, description of new mutations and notes on population genetics.</title>
        <authorList>
            <person name="Nolte O.J."/>
        </authorList>
    </citation>
    <scope>NUCLEOTIDE SEQUENCE [GENOMIC DNA]</scope>
    <scope>VARIANT PRO-549</scope>
    <source>
        <strain>BNCV / Serogroup B</strain>
    </source>
</reference>
<reference key="2">
    <citation type="journal article" date="2000" name="Science">
        <title>Complete genome sequence of Neisseria meningitidis serogroup B strain MC58.</title>
        <authorList>
            <person name="Tettelin H."/>
            <person name="Saunders N.J."/>
            <person name="Heidelberg J.F."/>
            <person name="Jeffries A.C."/>
            <person name="Nelson K.E."/>
            <person name="Eisen J.A."/>
            <person name="Ketchum K.A."/>
            <person name="Hood D.W."/>
            <person name="Peden J.F."/>
            <person name="Dodson R.J."/>
            <person name="Nelson W.C."/>
            <person name="Gwinn M.L."/>
            <person name="DeBoy R.T."/>
            <person name="Peterson J.D."/>
            <person name="Hickey E.K."/>
            <person name="Haft D.H."/>
            <person name="Salzberg S.L."/>
            <person name="White O."/>
            <person name="Fleischmann R.D."/>
            <person name="Dougherty B.A."/>
            <person name="Mason T.M."/>
            <person name="Ciecko A."/>
            <person name="Parksey D.S."/>
            <person name="Blair E."/>
            <person name="Cittone H."/>
            <person name="Clark E.B."/>
            <person name="Cotton M.D."/>
            <person name="Utterback T.R."/>
            <person name="Khouri H.M."/>
            <person name="Qin H."/>
            <person name="Vamathevan J.J."/>
            <person name="Gill J."/>
            <person name="Scarlato V."/>
            <person name="Masignani V."/>
            <person name="Pizza M."/>
            <person name="Grandi G."/>
            <person name="Sun L."/>
            <person name="Smith H.O."/>
            <person name="Fraser C.M."/>
            <person name="Moxon E.R."/>
            <person name="Rappuoli R."/>
            <person name="Venter J.C."/>
        </authorList>
    </citation>
    <scope>NUCLEOTIDE SEQUENCE [LARGE SCALE GENOMIC DNA]</scope>
    <source>
        <strain>ATCC BAA-335 / MC58</strain>
    </source>
</reference>
<accession>Q59622</accession>
<protein>
    <recommendedName>
        <fullName evidence="1">DNA-directed RNA polymerase subunit beta</fullName>
        <shortName evidence="1">RNAP subunit beta</shortName>
        <ecNumber evidence="1">2.7.7.6</ecNumber>
    </recommendedName>
    <alternativeName>
        <fullName evidence="1">RNA polymerase subunit beta</fullName>
    </alternativeName>
    <alternativeName>
        <fullName evidence="1">Transcriptase subunit beta</fullName>
    </alternativeName>
</protein>
<dbReference type="EC" id="2.7.7.6" evidence="1"/>
<dbReference type="EMBL" id="Z54353">
    <property type="protein sequence ID" value="CAA91164.1"/>
    <property type="molecule type" value="Genomic_DNA"/>
</dbReference>
<dbReference type="EMBL" id="AE002098">
    <property type="protein sequence ID" value="AAF40591.1"/>
    <property type="status" value="ALT_INIT"/>
    <property type="molecule type" value="Genomic_DNA"/>
</dbReference>
<dbReference type="PIR" id="A81236">
    <property type="entry name" value="A81236"/>
</dbReference>
<dbReference type="PIR" id="T30824">
    <property type="entry name" value="T30824"/>
</dbReference>
<dbReference type="RefSeq" id="NP_273190.1">
    <property type="nucleotide sequence ID" value="NC_003112.2"/>
</dbReference>
<dbReference type="RefSeq" id="WP_002224771.1">
    <property type="nucleotide sequence ID" value="NC_003112.2"/>
</dbReference>
<dbReference type="SMR" id="Q59622"/>
<dbReference type="FunCoup" id="Q59622">
    <property type="interactions" value="519"/>
</dbReference>
<dbReference type="STRING" id="122586.NMB0132"/>
<dbReference type="PaxDb" id="122586-NMB0132"/>
<dbReference type="KEGG" id="nme:NMB0132"/>
<dbReference type="PATRIC" id="fig|122586.8.peg.171"/>
<dbReference type="HOGENOM" id="CLU_000524_4_0_4"/>
<dbReference type="InParanoid" id="Q59622"/>
<dbReference type="OrthoDB" id="9803954at2"/>
<dbReference type="Proteomes" id="UP000000425">
    <property type="component" value="Chromosome"/>
</dbReference>
<dbReference type="GO" id="GO:0000428">
    <property type="term" value="C:DNA-directed RNA polymerase complex"/>
    <property type="evidence" value="ECO:0007669"/>
    <property type="project" value="UniProtKB-KW"/>
</dbReference>
<dbReference type="GO" id="GO:0003677">
    <property type="term" value="F:DNA binding"/>
    <property type="evidence" value="ECO:0007669"/>
    <property type="project" value="UniProtKB-UniRule"/>
</dbReference>
<dbReference type="GO" id="GO:0003899">
    <property type="term" value="F:DNA-directed RNA polymerase activity"/>
    <property type="evidence" value="ECO:0007669"/>
    <property type="project" value="UniProtKB-UniRule"/>
</dbReference>
<dbReference type="GO" id="GO:0032549">
    <property type="term" value="F:ribonucleoside binding"/>
    <property type="evidence" value="ECO:0007669"/>
    <property type="project" value="InterPro"/>
</dbReference>
<dbReference type="GO" id="GO:0006351">
    <property type="term" value="P:DNA-templated transcription"/>
    <property type="evidence" value="ECO:0007669"/>
    <property type="project" value="UniProtKB-UniRule"/>
</dbReference>
<dbReference type="GO" id="GO:0046677">
    <property type="term" value="P:response to antibiotic"/>
    <property type="evidence" value="ECO:0007669"/>
    <property type="project" value="UniProtKB-KW"/>
</dbReference>
<dbReference type="CDD" id="cd00653">
    <property type="entry name" value="RNA_pol_B_RPB2"/>
    <property type="match status" value="1"/>
</dbReference>
<dbReference type="FunFam" id="2.30.150.10:FF:000001">
    <property type="entry name" value="DNA-directed RNA polymerase subunit beta"/>
    <property type="match status" value="1"/>
</dbReference>
<dbReference type="FunFam" id="2.40.50.100:FF:000006">
    <property type="entry name" value="DNA-directed RNA polymerase subunit beta"/>
    <property type="match status" value="1"/>
</dbReference>
<dbReference type="FunFam" id="2.40.50.150:FF:000001">
    <property type="entry name" value="DNA-directed RNA polymerase subunit beta"/>
    <property type="match status" value="1"/>
</dbReference>
<dbReference type="FunFam" id="3.90.1110.10:FF:000001">
    <property type="entry name" value="DNA-directed RNA polymerase subunit beta"/>
    <property type="match status" value="1"/>
</dbReference>
<dbReference type="FunFam" id="3.90.1110.10:FF:000004">
    <property type="entry name" value="DNA-directed RNA polymerase subunit beta"/>
    <property type="match status" value="1"/>
</dbReference>
<dbReference type="FunFam" id="3.90.1800.10:FF:000001">
    <property type="entry name" value="DNA-directed RNA polymerase subunit beta"/>
    <property type="match status" value="1"/>
</dbReference>
<dbReference type="Gene3D" id="2.40.50.100">
    <property type="match status" value="1"/>
</dbReference>
<dbReference type="Gene3D" id="2.40.50.150">
    <property type="match status" value="1"/>
</dbReference>
<dbReference type="Gene3D" id="3.90.1100.10">
    <property type="match status" value="2"/>
</dbReference>
<dbReference type="Gene3D" id="2.30.150.10">
    <property type="entry name" value="DNA-directed RNA polymerase, beta subunit, external 1 domain"/>
    <property type="match status" value="1"/>
</dbReference>
<dbReference type="Gene3D" id="2.40.270.10">
    <property type="entry name" value="DNA-directed RNA polymerase, subunit 2, domain 6"/>
    <property type="match status" value="2"/>
</dbReference>
<dbReference type="Gene3D" id="3.90.1800.10">
    <property type="entry name" value="RNA polymerase alpha subunit dimerisation domain"/>
    <property type="match status" value="1"/>
</dbReference>
<dbReference type="Gene3D" id="3.90.1110.10">
    <property type="entry name" value="RNA polymerase Rpb2, domain 2"/>
    <property type="match status" value="2"/>
</dbReference>
<dbReference type="HAMAP" id="MF_01321">
    <property type="entry name" value="RNApol_bact_RpoB"/>
    <property type="match status" value="1"/>
</dbReference>
<dbReference type="InterPro" id="IPR042107">
    <property type="entry name" value="DNA-dir_RNA_pol_bsu_ext_1_sf"/>
</dbReference>
<dbReference type="InterPro" id="IPR019462">
    <property type="entry name" value="DNA-dir_RNA_pol_bsu_external_1"/>
</dbReference>
<dbReference type="InterPro" id="IPR015712">
    <property type="entry name" value="DNA-dir_RNA_pol_su2"/>
</dbReference>
<dbReference type="InterPro" id="IPR007120">
    <property type="entry name" value="DNA-dir_RNAP_su2_dom"/>
</dbReference>
<dbReference type="InterPro" id="IPR037033">
    <property type="entry name" value="DNA-dir_RNAP_su2_hyb_sf"/>
</dbReference>
<dbReference type="InterPro" id="IPR010243">
    <property type="entry name" value="RNA_pol_bsu_bac"/>
</dbReference>
<dbReference type="InterPro" id="IPR007121">
    <property type="entry name" value="RNA_pol_bsu_CS"/>
</dbReference>
<dbReference type="InterPro" id="IPR007644">
    <property type="entry name" value="RNA_pol_bsu_protrusion"/>
</dbReference>
<dbReference type="InterPro" id="IPR007642">
    <property type="entry name" value="RNA_pol_Rpb2_2"/>
</dbReference>
<dbReference type="InterPro" id="IPR037034">
    <property type="entry name" value="RNA_pol_Rpb2_2_sf"/>
</dbReference>
<dbReference type="InterPro" id="IPR007645">
    <property type="entry name" value="RNA_pol_Rpb2_3"/>
</dbReference>
<dbReference type="InterPro" id="IPR007641">
    <property type="entry name" value="RNA_pol_Rpb2_7"/>
</dbReference>
<dbReference type="InterPro" id="IPR014724">
    <property type="entry name" value="RNA_pol_RPB2_OB-fold"/>
</dbReference>
<dbReference type="NCBIfam" id="NF001616">
    <property type="entry name" value="PRK00405.1"/>
    <property type="match status" value="1"/>
</dbReference>
<dbReference type="NCBIfam" id="TIGR02013">
    <property type="entry name" value="rpoB"/>
    <property type="match status" value="1"/>
</dbReference>
<dbReference type="PANTHER" id="PTHR20856">
    <property type="entry name" value="DNA-DIRECTED RNA POLYMERASE I SUBUNIT 2"/>
    <property type="match status" value="1"/>
</dbReference>
<dbReference type="Pfam" id="PF04563">
    <property type="entry name" value="RNA_pol_Rpb2_1"/>
    <property type="match status" value="1"/>
</dbReference>
<dbReference type="Pfam" id="PF04561">
    <property type="entry name" value="RNA_pol_Rpb2_2"/>
    <property type="match status" value="2"/>
</dbReference>
<dbReference type="Pfam" id="PF04565">
    <property type="entry name" value="RNA_pol_Rpb2_3"/>
    <property type="match status" value="1"/>
</dbReference>
<dbReference type="Pfam" id="PF10385">
    <property type="entry name" value="RNA_pol_Rpb2_45"/>
    <property type="match status" value="1"/>
</dbReference>
<dbReference type="Pfam" id="PF00562">
    <property type="entry name" value="RNA_pol_Rpb2_6"/>
    <property type="match status" value="1"/>
</dbReference>
<dbReference type="Pfam" id="PF04560">
    <property type="entry name" value="RNA_pol_Rpb2_7"/>
    <property type="match status" value="1"/>
</dbReference>
<dbReference type="SUPFAM" id="SSF64484">
    <property type="entry name" value="beta and beta-prime subunits of DNA dependent RNA-polymerase"/>
    <property type="match status" value="1"/>
</dbReference>
<dbReference type="PROSITE" id="PS01166">
    <property type="entry name" value="RNA_POL_BETA"/>
    <property type="match status" value="1"/>
</dbReference>
<comment type="function">
    <text evidence="1">DNA-dependent RNA polymerase catalyzes the transcription of DNA into RNA using the four ribonucleoside triphosphates as substrates.</text>
</comment>
<comment type="catalytic activity">
    <reaction evidence="1">
        <text>RNA(n) + a ribonucleoside 5'-triphosphate = RNA(n+1) + diphosphate</text>
        <dbReference type="Rhea" id="RHEA:21248"/>
        <dbReference type="Rhea" id="RHEA-COMP:14527"/>
        <dbReference type="Rhea" id="RHEA-COMP:17342"/>
        <dbReference type="ChEBI" id="CHEBI:33019"/>
        <dbReference type="ChEBI" id="CHEBI:61557"/>
        <dbReference type="ChEBI" id="CHEBI:140395"/>
        <dbReference type="EC" id="2.7.7.6"/>
    </reaction>
</comment>
<comment type="subunit">
    <text evidence="1">The RNAP catalytic core consists of 2 alpha, 1 beta, 1 beta' and 1 omega subunit. When a sigma factor is associated with the core the holoenzyme is formed, which can initiate transcription.</text>
</comment>
<comment type="similarity">
    <text evidence="1">Belongs to the RNA polymerase beta chain family.</text>
</comment>
<comment type="sequence caution" evidence="3">
    <conflict type="erroneous initiation">
        <sequence resource="EMBL-CDS" id="AAF40591"/>
    </conflict>
</comment>